<feature type="chain" id="PRO_0000346275" description="D-ribose pyranase">
    <location>
        <begin position="1"/>
        <end position="134"/>
    </location>
</feature>
<feature type="active site" description="Proton donor" evidence="1">
    <location>
        <position position="20"/>
    </location>
</feature>
<feature type="binding site" evidence="1">
    <location>
        <position position="28"/>
    </location>
    <ligand>
        <name>substrate</name>
    </ligand>
</feature>
<feature type="binding site" evidence="1">
    <location>
        <position position="99"/>
    </location>
    <ligand>
        <name>substrate</name>
    </ligand>
</feature>
<feature type="binding site" evidence="1">
    <location>
        <begin position="123"/>
        <end position="125"/>
    </location>
    <ligand>
        <name>substrate</name>
    </ligand>
</feature>
<gene>
    <name evidence="1" type="primary">rbsD</name>
    <name type="ordered locus">SE_2087</name>
</gene>
<dbReference type="EC" id="5.4.99.62" evidence="1"/>
<dbReference type="EMBL" id="AE015929">
    <property type="protein sequence ID" value="AAO05729.1"/>
    <property type="molecule type" value="Genomic_DNA"/>
</dbReference>
<dbReference type="RefSeq" id="NP_765642.1">
    <property type="nucleotide sequence ID" value="NC_004461.1"/>
</dbReference>
<dbReference type="RefSeq" id="WP_002469069.1">
    <property type="nucleotide sequence ID" value="NZ_WBME01000013.1"/>
</dbReference>
<dbReference type="SMR" id="Q8CN17"/>
<dbReference type="GeneID" id="50017830"/>
<dbReference type="KEGG" id="sep:SE_2087"/>
<dbReference type="PATRIC" id="fig|176280.10.peg.2039"/>
<dbReference type="eggNOG" id="COG1869">
    <property type="taxonomic scope" value="Bacteria"/>
</dbReference>
<dbReference type="HOGENOM" id="CLU_135498_0_0_9"/>
<dbReference type="OrthoDB" id="9805009at2"/>
<dbReference type="UniPathway" id="UPA00916">
    <property type="reaction ID" value="UER00888"/>
</dbReference>
<dbReference type="Proteomes" id="UP000001411">
    <property type="component" value="Chromosome"/>
</dbReference>
<dbReference type="GO" id="GO:0005829">
    <property type="term" value="C:cytosol"/>
    <property type="evidence" value="ECO:0007669"/>
    <property type="project" value="TreeGrafter"/>
</dbReference>
<dbReference type="GO" id="GO:0062193">
    <property type="term" value="F:D-ribose pyranase activity"/>
    <property type="evidence" value="ECO:0007669"/>
    <property type="project" value="UniProtKB-EC"/>
</dbReference>
<dbReference type="GO" id="GO:0016872">
    <property type="term" value="F:intramolecular lyase activity"/>
    <property type="evidence" value="ECO:0007669"/>
    <property type="project" value="UniProtKB-UniRule"/>
</dbReference>
<dbReference type="GO" id="GO:0048029">
    <property type="term" value="F:monosaccharide binding"/>
    <property type="evidence" value="ECO:0007669"/>
    <property type="project" value="InterPro"/>
</dbReference>
<dbReference type="GO" id="GO:0019303">
    <property type="term" value="P:D-ribose catabolic process"/>
    <property type="evidence" value="ECO:0007669"/>
    <property type="project" value="UniProtKB-UniRule"/>
</dbReference>
<dbReference type="FunFam" id="3.40.1650.10:FF:000004">
    <property type="entry name" value="D-ribose pyranase"/>
    <property type="match status" value="1"/>
</dbReference>
<dbReference type="Gene3D" id="3.40.1650.10">
    <property type="entry name" value="RbsD-like domain"/>
    <property type="match status" value="1"/>
</dbReference>
<dbReference type="HAMAP" id="MF_01661">
    <property type="entry name" value="D_rib_pyranase"/>
    <property type="match status" value="1"/>
</dbReference>
<dbReference type="InterPro" id="IPR023064">
    <property type="entry name" value="D-ribose_pyranase"/>
</dbReference>
<dbReference type="InterPro" id="IPR023750">
    <property type="entry name" value="RbsD-like_sf"/>
</dbReference>
<dbReference type="InterPro" id="IPR007721">
    <property type="entry name" value="RbsD_FucU"/>
</dbReference>
<dbReference type="NCBIfam" id="NF008761">
    <property type="entry name" value="PRK11797.1"/>
    <property type="match status" value="1"/>
</dbReference>
<dbReference type="PANTHER" id="PTHR37831">
    <property type="entry name" value="D-RIBOSE PYRANASE"/>
    <property type="match status" value="1"/>
</dbReference>
<dbReference type="PANTHER" id="PTHR37831:SF1">
    <property type="entry name" value="D-RIBOSE PYRANASE"/>
    <property type="match status" value="1"/>
</dbReference>
<dbReference type="Pfam" id="PF05025">
    <property type="entry name" value="RbsD_FucU"/>
    <property type="match status" value="1"/>
</dbReference>
<dbReference type="SUPFAM" id="SSF102546">
    <property type="entry name" value="RbsD-like"/>
    <property type="match status" value="1"/>
</dbReference>
<evidence type="ECO:0000255" key="1">
    <source>
        <dbReference type="HAMAP-Rule" id="MF_01661"/>
    </source>
</evidence>
<proteinExistence type="inferred from homology"/>
<name>RBSD_STAES</name>
<organism>
    <name type="scientific">Staphylococcus epidermidis (strain ATCC 12228 / FDA PCI 1200)</name>
    <dbReference type="NCBI Taxonomy" id="176280"/>
    <lineage>
        <taxon>Bacteria</taxon>
        <taxon>Bacillati</taxon>
        <taxon>Bacillota</taxon>
        <taxon>Bacilli</taxon>
        <taxon>Bacillales</taxon>
        <taxon>Staphylococcaceae</taxon>
        <taxon>Staphylococcus</taxon>
    </lineage>
</organism>
<keyword id="KW-0119">Carbohydrate metabolism</keyword>
<keyword id="KW-0963">Cytoplasm</keyword>
<keyword id="KW-0413">Isomerase</keyword>
<comment type="function">
    <text evidence="1">Catalyzes the interconversion of beta-pyran and beta-furan forms of D-ribose.</text>
</comment>
<comment type="catalytic activity">
    <reaction evidence="1">
        <text>beta-D-ribopyranose = beta-D-ribofuranose</text>
        <dbReference type="Rhea" id="RHEA:25432"/>
        <dbReference type="ChEBI" id="CHEBI:27476"/>
        <dbReference type="ChEBI" id="CHEBI:47002"/>
        <dbReference type="EC" id="5.4.99.62"/>
    </reaction>
</comment>
<comment type="pathway">
    <text evidence="1">Carbohydrate metabolism; D-ribose degradation; D-ribose 5-phosphate from beta-D-ribopyranose: step 1/2.</text>
</comment>
<comment type="subunit">
    <text evidence="1">Homodecamer.</text>
</comment>
<comment type="subcellular location">
    <subcellularLocation>
        <location evidence="1">Cytoplasm</location>
    </subcellularLocation>
</comment>
<comment type="similarity">
    <text evidence="1">Belongs to the RbsD / FucU family. RbsD subfamily.</text>
</comment>
<reference key="1">
    <citation type="journal article" date="2003" name="Mol. Microbiol.">
        <title>Genome-based analysis of virulence genes in a non-biofilm-forming Staphylococcus epidermidis strain (ATCC 12228).</title>
        <authorList>
            <person name="Zhang Y.-Q."/>
            <person name="Ren S.-X."/>
            <person name="Li H.-L."/>
            <person name="Wang Y.-X."/>
            <person name="Fu G."/>
            <person name="Yang J."/>
            <person name="Qin Z.-Q."/>
            <person name="Miao Y.-G."/>
            <person name="Wang W.-Y."/>
            <person name="Chen R.-S."/>
            <person name="Shen Y."/>
            <person name="Chen Z."/>
            <person name="Yuan Z.-H."/>
            <person name="Zhao G.-P."/>
            <person name="Qu D."/>
            <person name="Danchin A."/>
            <person name="Wen Y.-M."/>
        </authorList>
    </citation>
    <scope>NUCLEOTIDE SEQUENCE [LARGE SCALE GENOMIC DNA]</scope>
    <source>
        <strain>ATCC 12228 / FDA PCI 1200</strain>
    </source>
</reference>
<sequence length="134" mass="14995">MKKTAVLNSHISSAISTLGHYDLLTINDAGMPIPNDDKRIDLAVTKSLPRFIDVLETVLTEMEIQKVYLAEEIKTANAQQLKAIKKLINDDVEIKFIAHSEMKEMLKSPLNKGNIRTGEITPFSNIILESNVTF</sequence>
<accession>Q8CN17</accession>
<protein>
    <recommendedName>
        <fullName evidence="1">D-ribose pyranase</fullName>
        <ecNumber evidence="1">5.4.99.62</ecNumber>
    </recommendedName>
</protein>